<protein>
    <recommendedName>
        <fullName evidence="1">Ribosomal RNA small subunit methyltransferase G</fullName>
        <ecNumber evidence="1">2.1.1.170</ecNumber>
    </recommendedName>
    <alternativeName>
        <fullName evidence="1">16S rRNA 7-methylguanosine methyltransferase</fullName>
        <shortName evidence="1">16S rRNA m7G methyltransferase</shortName>
    </alternativeName>
</protein>
<organism>
    <name type="scientific">Burkholderia ambifaria (strain MC40-6)</name>
    <dbReference type="NCBI Taxonomy" id="398577"/>
    <lineage>
        <taxon>Bacteria</taxon>
        <taxon>Pseudomonadati</taxon>
        <taxon>Pseudomonadota</taxon>
        <taxon>Betaproteobacteria</taxon>
        <taxon>Burkholderiales</taxon>
        <taxon>Burkholderiaceae</taxon>
        <taxon>Burkholderia</taxon>
        <taxon>Burkholderia cepacia complex</taxon>
    </lineage>
</organism>
<proteinExistence type="inferred from homology"/>
<gene>
    <name evidence="1" type="primary">rsmG</name>
    <name type="ordered locus">BamMC406_0095</name>
</gene>
<feature type="chain" id="PRO_1000092616" description="Ribosomal RNA small subunit methyltransferase G">
    <location>
        <begin position="1"/>
        <end position="228"/>
    </location>
</feature>
<feature type="binding site" evidence="1">
    <location>
        <position position="89"/>
    </location>
    <ligand>
        <name>S-adenosyl-L-methionine</name>
        <dbReference type="ChEBI" id="CHEBI:59789"/>
    </ligand>
</feature>
<feature type="binding site" evidence="1">
    <location>
        <position position="94"/>
    </location>
    <ligand>
        <name>S-adenosyl-L-methionine</name>
        <dbReference type="ChEBI" id="CHEBI:59789"/>
    </ligand>
</feature>
<feature type="binding site" evidence="1">
    <location>
        <begin position="140"/>
        <end position="141"/>
    </location>
    <ligand>
        <name>S-adenosyl-L-methionine</name>
        <dbReference type="ChEBI" id="CHEBI:59789"/>
    </ligand>
</feature>
<feature type="binding site" evidence="1">
    <location>
        <position position="159"/>
    </location>
    <ligand>
        <name>S-adenosyl-L-methionine</name>
        <dbReference type="ChEBI" id="CHEBI:59789"/>
    </ligand>
</feature>
<sequence>MTARRAPAVNRDVLEQMLVDGTAALDIALTDAQRNQLLDYVALLGKWNAVYNLTAIRDPKQMLIQHILDSLSIVPHLRDRASARVLDVGSGGGLPGIVLAIVQPDWQVTLNDIVQKKSAFQTQMRAELKLANLSVVTGRVELLQPGVEVPEKFDMIVSRAFADLSDFVKLARHLVAPGGSIWAMKGVHPDDEIARLPEGSRVKQTMRLAVPMLDAERHLIEVVVDEAN</sequence>
<accession>B1YQK3</accession>
<comment type="function">
    <text evidence="1">Specifically methylates the N7 position of guanine in position 527 of 16S rRNA.</text>
</comment>
<comment type="catalytic activity">
    <reaction evidence="1">
        <text>guanosine(527) in 16S rRNA + S-adenosyl-L-methionine = N(7)-methylguanosine(527) in 16S rRNA + S-adenosyl-L-homocysteine</text>
        <dbReference type="Rhea" id="RHEA:42732"/>
        <dbReference type="Rhea" id="RHEA-COMP:10209"/>
        <dbReference type="Rhea" id="RHEA-COMP:10210"/>
        <dbReference type="ChEBI" id="CHEBI:57856"/>
        <dbReference type="ChEBI" id="CHEBI:59789"/>
        <dbReference type="ChEBI" id="CHEBI:74269"/>
        <dbReference type="ChEBI" id="CHEBI:74480"/>
        <dbReference type="EC" id="2.1.1.170"/>
    </reaction>
</comment>
<comment type="subcellular location">
    <subcellularLocation>
        <location evidence="1">Cytoplasm</location>
    </subcellularLocation>
</comment>
<comment type="similarity">
    <text evidence="1">Belongs to the methyltransferase superfamily. RNA methyltransferase RsmG family.</text>
</comment>
<evidence type="ECO:0000255" key="1">
    <source>
        <dbReference type="HAMAP-Rule" id="MF_00074"/>
    </source>
</evidence>
<reference key="1">
    <citation type="submission" date="2008-04" db="EMBL/GenBank/DDBJ databases">
        <title>Complete sequence of chromosome 1 of Burkholderia ambifaria MC40-6.</title>
        <authorList>
            <person name="Copeland A."/>
            <person name="Lucas S."/>
            <person name="Lapidus A."/>
            <person name="Glavina del Rio T."/>
            <person name="Dalin E."/>
            <person name="Tice H."/>
            <person name="Pitluck S."/>
            <person name="Chain P."/>
            <person name="Malfatti S."/>
            <person name="Shin M."/>
            <person name="Vergez L."/>
            <person name="Lang D."/>
            <person name="Schmutz J."/>
            <person name="Larimer F."/>
            <person name="Land M."/>
            <person name="Hauser L."/>
            <person name="Kyrpides N."/>
            <person name="Lykidis A."/>
            <person name="Ramette A."/>
            <person name="Konstantinidis K."/>
            <person name="Tiedje J."/>
            <person name="Richardson P."/>
        </authorList>
    </citation>
    <scope>NUCLEOTIDE SEQUENCE [LARGE SCALE GENOMIC DNA]</scope>
    <source>
        <strain>MC40-6</strain>
    </source>
</reference>
<dbReference type="EC" id="2.1.1.170" evidence="1"/>
<dbReference type="EMBL" id="CP001025">
    <property type="protein sequence ID" value="ACB62597.1"/>
    <property type="molecule type" value="Genomic_DNA"/>
</dbReference>
<dbReference type="RefSeq" id="WP_012362762.1">
    <property type="nucleotide sequence ID" value="NC_010551.1"/>
</dbReference>
<dbReference type="SMR" id="B1YQK3"/>
<dbReference type="KEGG" id="bac:BamMC406_0095"/>
<dbReference type="HOGENOM" id="CLU_065341_2_0_4"/>
<dbReference type="OrthoDB" id="9808773at2"/>
<dbReference type="Proteomes" id="UP000001680">
    <property type="component" value="Chromosome 1"/>
</dbReference>
<dbReference type="GO" id="GO:0005829">
    <property type="term" value="C:cytosol"/>
    <property type="evidence" value="ECO:0007669"/>
    <property type="project" value="TreeGrafter"/>
</dbReference>
<dbReference type="GO" id="GO:0070043">
    <property type="term" value="F:rRNA (guanine-N7-)-methyltransferase activity"/>
    <property type="evidence" value="ECO:0007669"/>
    <property type="project" value="UniProtKB-UniRule"/>
</dbReference>
<dbReference type="CDD" id="cd02440">
    <property type="entry name" value="AdoMet_MTases"/>
    <property type="match status" value="1"/>
</dbReference>
<dbReference type="Gene3D" id="3.40.50.150">
    <property type="entry name" value="Vaccinia Virus protein VP39"/>
    <property type="match status" value="1"/>
</dbReference>
<dbReference type="HAMAP" id="MF_00074">
    <property type="entry name" value="16SrRNA_methyltr_G"/>
    <property type="match status" value="1"/>
</dbReference>
<dbReference type="InterPro" id="IPR003682">
    <property type="entry name" value="rRNA_ssu_MeTfrase_G"/>
</dbReference>
<dbReference type="InterPro" id="IPR029063">
    <property type="entry name" value="SAM-dependent_MTases_sf"/>
</dbReference>
<dbReference type="NCBIfam" id="TIGR00138">
    <property type="entry name" value="rsmG_gidB"/>
    <property type="match status" value="1"/>
</dbReference>
<dbReference type="PANTHER" id="PTHR31760">
    <property type="entry name" value="S-ADENOSYL-L-METHIONINE-DEPENDENT METHYLTRANSFERASES SUPERFAMILY PROTEIN"/>
    <property type="match status" value="1"/>
</dbReference>
<dbReference type="PANTHER" id="PTHR31760:SF0">
    <property type="entry name" value="S-ADENOSYL-L-METHIONINE-DEPENDENT METHYLTRANSFERASES SUPERFAMILY PROTEIN"/>
    <property type="match status" value="1"/>
</dbReference>
<dbReference type="Pfam" id="PF02527">
    <property type="entry name" value="GidB"/>
    <property type="match status" value="1"/>
</dbReference>
<dbReference type="PIRSF" id="PIRSF003078">
    <property type="entry name" value="GidB"/>
    <property type="match status" value="1"/>
</dbReference>
<dbReference type="SUPFAM" id="SSF53335">
    <property type="entry name" value="S-adenosyl-L-methionine-dependent methyltransferases"/>
    <property type="match status" value="1"/>
</dbReference>
<keyword id="KW-0963">Cytoplasm</keyword>
<keyword id="KW-0489">Methyltransferase</keyword>
<keyword id="KW-0698">rRNA processing</keyword>
<keyword id="KW-0949">S-adenosyl-L-methionine</keyword>
<keyword id="KW-0808">Transferase</keyword>
<name>RSMG_BURA4</name>